<organism>
    <name type="scientific">Synechocystis sp. (strain ATCC 27184 / PCC 6803 / Kazusa)</name>
    <dbReference type="NCBI Taxonomy" id="1111708"/>
    <lineage>
        <taxon>Bacteria</taxon>
        <taxon>Bacillati</taxon>
        <taxon>Cyanobacteriota</taxon>
        <taxon>Cyanophyceae</taxon>
        <taxon>Synechococcales</taxon>
        <taxon>Merismopediaceae</taxon>
        <taxon>Synechocystis</taxon>
    </lineage>
</organism>
<gene>
    <name evidence="6" type="primary">argZ</name>
    <name evidence="9" type="ordered locus">sll1336</name>
</gene>
<keyword id="KW-0002">3D-structure</keyword>
<keyword id="KW-0378">Hydrolase</keyword>
<keyword id="KW-0456">Lyase</keyword>
<keyword id="KW-0520">NAD</keyword>
<keyword id="KW-0547">Nucleotide-binding</keyword>
<keyword id="KW-1185">Reference proteome</keyword>
<accession>P74535</accession>
<dbReference type="EC" id="3.5.3.27" evidence="2 4"/>
<dbReference type="EC" id="4.3.1.12" evidence="1"/>
<dbReference type="EMBL" id="BA000022">
    <property type="protein sequence ID" value="BAA18641.1"/>
    <property type="molecule type" value="Genomic_DNA"/>
</dbReference>
<dbReference type="PIR" id="S76729">
    <property type="entry name" value="S76729"/>
</dbReference>
<dbReference type="PDB" id="6JUY">
    <property type="method" value="X-ray"/>
    <property type="resolution" value="2.97 A"/>
    <property type="chains" value="A/B/C/D=1-705"/>
</dbReference>
<dbReference type="PDB" id="6JUZ">
    <property type="method" value="X-ray"/>
    <property type="resolution" value="1.21 A"/>
    <property type="chains" value="A=1-281"/>
</dbReference>
<dbReference type="PDB" id="6JV0">
    <property type="method" value="X-ray"/>
    <property type="resolution" value="1.14 A"/>
    <property type="chains" value="A=1-281"/>
</dbReference>
<dbReference type="PDB" id="6JV1">
    <property type="method" value="X-ray"/>
    <property type="resolution" value="1.20 A"/>
    <property type="chains" value="A=1-281"/>
</dbReference>
<dbReference type="PDBsum" id="6JUY"/>
<dbReference type="PDBsum" id="6JUZ"/>
<dbReference type="PDBsum" id="6JV0"/>
<dbReference type="PDBsum" id="6JV1"/>
<dbReference type="SMR" id="P74535"/>
<dbReference type="STRING" id="1148.gene:10500406"/>
<dbReference type="PaxDb" id="1148-1653730"/>
<dbReference type="EnsemblBacteria" id="BAA18641">
    <property type="protein sequence ID" value="BAA18641"/>
    <property type="gene ID" value="BAA18641"/>
</dbReference>
<dbReference type="KEGG" id="syn:sll1336"/>
<dbReference type="eggNOG" id="COG1834">
    <property type="taxonomic scope" value="Bacteria"/>
</dbReference>
<dbReference type="eggNOG" id="COG1915">
    <property type="taxonomic scope" value="Bacteria"/>
</dbReference>
<dbReference type="InParanoid" id="P74535"/>
<dbReference type="PhylomeDB" id="P74535"/>
<dbReference type="Proteomes" id="UP000001425">
    <property type="component" value="Chromosome"/>
</dbReference>
<dbReference type="GO" id="GO:0016787">
    <property type="term" value="F:hydrolase activity"/>
    <property type="evidence" value="ECO:0007669"/>
    <property type="project" value="UniProtKB-KW"/>
</dbReference>
<dbReference type="GO" id="GO:0016829">
    <property type="term" value="F:lyase activity"/>
    <property type="evidence" value="ECO:0007669"/>
    <property type="project" value="UniProtKB-KW"/>
</dbReference>
<dbReference type="GO" id="GO:0000166">
    <property type="term" value="F:nucleotide binding"/>
    <property type="evidence" value="ECO:0007669"/>
    <property type="project" value="UniProtKB-KW"/>
</dbReference>
<dbReference type="CDD" id="cd12144">
    <property type="entry name" value="SDH_N_domain"/>
    <property type="match status" value="1"/>
</dbReference>
<dbReference type="Gene3D" id="2.40.420.10">
    <property type="entry name" value="conserved putative lor/sdh protein from methanococcus maripaludis s2 domain"/>
    <property type="match status" value="1"/>
</dbReference>
<dbReference type="Gene3D" id="3.75.10.10">
    <property type="entry name" value="L-arginine/glycine Amidinotransferase, Chain A"/>
    <property type="match status" value="1"/>
</dbReference>
<dbReference type="Gene3D" id="3.40.50.10690">
    <property type="entry name" value="putative lor/sdh protein like domains"/>
    <property type="match status" value="1"/>
</dbReference>
<dbReference type="InterPro" id="IPR005239">
    <property type="entry name" value="ArgZ/ArgE-like"/>
</dbReference>
<dbReference type="InterPro" id="IPR048964">
    <property type="entry name" value="ArgZ/ArgE-like_C_1st"/>
</dbReference>
<dbReference type="InterPro" id="IPR048963">
    <property type="entry name" value="ArgZ/ArgE-like_C_2nd"/>
</dbReference>
<dbReference type="InterPro" id="IPR029035">
    <property type="entry name" value="DHS-like_NAD/FAD-binding_dom"/>
</dbReference>
<dbReference type="InterPro" id="IPR007545">
    <property type="entry name" value="LOR/SDH_bifunc_enz_cons_dom"/>
</dbReference>
<dbReference type="NCBIfam" id="TIGR00300">
    <property type="entry name" value="TIGR00300 family protein"/>
    <property type="match status" value="1"/>
</dbReference>
<dbReference type="Pfam" id="PF21571">
    <property type="entry name" value="ArgZ-like_C_1st"/>
    <property type="match status" value="1"/>
</dbReference>
<dbReference type="Pfam" id="PF21570">
    <property type="entry name" value="ArgZ-like_C_2nd"/>
    <property type="match status" value="1"/>
</dbReference>
<dbReference type="Pfam" id="PF19420">
    <property type="entry name" value="DDAH_eukar"/>
    <property type="match status" value="1"/>
</dbReference>
<dbReference type="Pfam" id="PF04455">
    <property type="entry name" value="Saccharop_dh_N"/>
    <property type="match status" value="1"/>
</dbReference>
<dbReference type="SUPFAM" id="SSF52467">
    <property type="entry name" value="DHS-like NAD/FAD-binding domain"/>
    <property type="match status" value="1"/>
</dbReference>
<dbReference type="SUPFAM" id="SSF55909">
    <property type="entry name" value="Pentein"/>
    <property type="match status" value="1"/>
</dbReference>
<sequence length="705" mass="78328">MADDIRILMCPPDHYDVDYVINPWMEGNIHKSSQERAVEQWKKLHQTIKECAIVDLVKPAKGWPDMVFTANAGLVLGENVVLSRFYHKERQGEEPYFKAWFEENGFTVYELPQDLPFEGAGDALFDREGRWLWAGYGFRSELDSHPYIAKWLDTEVVSLRLIDERFYHLDTCFCPLSGGYLLYYPPAFDAYSNRVIEMRIPPEKRIIVEELDAVNFACNAVNVNDIIIMNLVSRTLKEKLAEAGFKVRETPLTEFLKAGGAAKCLTLRVTEPILPDVHATVSIESRVIRMEGHLLDAGILNQALDLVVENSGSFRVLNFNLGVERNSTSSAEVRVSAPSHQIMEEIMTELIDLGAVPPPQELCDINTETVTQGGVAPDDFYVSTIYPTEVRVNCEWVQVTGQRMDAAIVVTSNPPSARCVLLRDLQVGDRVMVGVEGIRTIKKVESHEGGTRKENKEFAFMAAGVSSERRVELLVEQIAWEMRQIRDQGGKIVVTAGPVVIHTGGAQHLSHLVREGYVHALLGGNAIAVHDIEQATMGTSLGVDMQRGIPVRGGHRHHLKIINSVRRYGGIRQAVEAGFISKGVMYECVKNNIPYCLAGSIRDDGPLPDTEMNLVRAQSRYSELIQGADMILMLSSMLHSIGVGNMTPSGVKMVCVDINPAVVTKLSDRGSVESVGVVTDVGLFLSLLVRQLQQLTRPYSLAETL</sequence>
<protein>
    <recommendedName>
        <fullName evidence="7">Bifunctional arginine dihydrolase/ornithine cyclodeaminase ArgZ</fullName>
    </recommendedName>
    <domain>
        <recommendedName>
            <fullName evidence="6">Arginine dihydrolase</fullName>
            <shortName evidence="7">Arg dihydrolase</shortName>
            <ecNumber evidence="2 4">3.5.3.27</ecNumber>
        </recommendedName>
    </domain>
    <domain>
        <recommendedName>
            <fullName evidence="6">Ornithine cyclodeaminase</fullName>
            <shortName evidence="7">OCD</shortName>
            <ecNumber evidence="1">4.3.1.12</ecNumber>
        </recommendedName>
    </domain>
</protein>
<proteinExistence type="evidence at protein level"/>
<comment type="function">
    <text evidence="1 2 3 4">Bifunctional enzyme involved in a cyanobacterial arginine utilization pathway that enables cellular adaptation to nitrogen fluctuations (PubMed:29632414, PubMed:30656751). Catalyzes the hydrolysis of arginine to ornithine, with the release of ammonia and carbon dioxide (PubMed:29632414, PubMed:31914412). Then, probably catalyzes the conversion of ornithine to proline, with the release of ammonia (By similarity). Is highly specific for arginine and cannot hydrolyze citrulline, dimethylarginine and other amino acids (PubMed:29632414).</text>
</comment>
<comment type="catalytic activity">
    <reaction evidence="2 4">
        <text>L-arginine + 2 H2O + 2 H(+) = L-ornithine + 2 NH4(+) + CO2</text>
        <dbReference type="Rhea" id="RHEA:78779"/>
        <dbReference type="ChEBI" id="CHEBI:15377"/>
        <dbReference type="ChEBI" id="CHEBI:15378"/>
        <dbReference type="ChEBI" id="CHEBI:16526"/>
        <dbReference type="ChEBI" id="CHEBI:28938"/>
        <dbReference type="ChEBI" id="CHEBI:32682"/>
        <dbReference type="ChEBI" id="CHEBI:46911"/>
        <dbReference type="EC" id="3.5.3.27"/>
    </reaction>
    <physiologicalReaction direction="left-to-right" evidence="2 4">
        <dbReference type="Rhea" id="RHEA:78780"/>
    </physiologicalReaction>
</comment>
<comment type="catalytic activity">
    <reaction evidence="1">
        <text>L-ornithine = L-proline + NH4(+)</text>
        <dbReference type="Rhea" id="RHEA:24368"/>
        <dbReference type="ChEBI" id="CHEBI:28938"/>
        <dbReference type="ChEBI" id="CHEBI:46911"/>
        <dbReference type="ChEBI" id="CHEBI:60039"/>
        <dbReference type="EC" id="4.3.1.12"/>
    </reaction>
    <physiologicalReaction direction="left-to-right" evidence="1">
        <dbReference type="Rhea" id="RHEA:24369"/>
    </physiologicalReaction>
</comment>
<comment type="cofactor">
    <cofactor evidence="1">
        <name>NAD(+)</name>
        <dbReference type="ChEBI" id="CHEBI:57540"/>
    </cofactor>
    <text evidence="1">Required for ornithine cyclodeaminase activity.</text>
</comment>
<comment type="activity regulation">
    <text evidence="2">Arginine dihydrolase activity does not require a metal cofactor.</text>
</comment>
<comment type="biophysicochemical properties">
    <kinetics>
        <KM evidence="2">0.51 mM for arginine</KM>
        <text evidence="2">kcat is 6.4 sec(-1) with arginine as substrate.</text>
    </kinetics>
</comment>
<comment type="subunit">
    <text evidence="4">Homotetramer.</text>
</comment>
<comment type="domain">
    <text evidence="1 2 4">The N-terminal domain (NTD) is responsible for arginine dihydrolase activity (PubMed:29632414, PubMed:31914412). The C-terminal domain (CTD) is responsible for ornithine cyclodeaminase activity (By similarity).</text>
</comment>
<comment type="disruption phenotype">
    <text evidence="2">Deletion of the gene abolishes the growth of the mutant on arginine but does not affect its growth on nitrate (PubMed:29632414). Deletion mutant exhibits higher levels of arginine and lower ornithine concentrations (PubMed:29632414). The mutant shows disruption of the cyanobacterial ornithine-ammonia cycle (OAC) and severe impairments in cell growth when nitrogen availability oscillates (PubMed:29632414). Arginine biosynthesis is also impaired (PubMed:29632414).</text>
</comment>
<comment type="similarity">
    <text evidence="7">In the N-terminal section; belongs to the DDAH family.</text>
</comment>
<comment type="similarity">
    <text evidence="7">In the C-terminal section; belongs to the AgrE/ArgZ ornithine cyclodeaminase family.</text>
</comment>
<comment type="caution">
    <text evidence="4 5">In Nostoc PCC 7120, the C-terminal domain of AgrE (AC Q8YMD9), an enzyme closely related to ArgZ, functions as an ornithine cyclodeaminase. However, Zhuang et al. did not detect the ornithine cyclodeaminase activity of ArgZ in their enzymatic assays (PubMed:31914412). The crystallized enzyme was cloned in E.coli, and E.flores suggests that a cyanobacterial factor is missing from the enzyme when ArgZ is expressed in E.coli, explaining the lack of cyclodeaminase activity in enzymatic assays (PubMed:32144146).</text>
</comment>
<reference key="1">
    <citation type="journal article" date="1996" name="DNA Res.">
        <title>Sequence analysis of the genome of the unicellular cyanobacterium Synechocystis sp. strain PCC6803. II. Sequence determination of the entire genome and assignment of potential protein-coding regions.</title>
        <authorList>
            <person name="Kaneko T."/>
            <person name="Sato S."/>
            <person name="Kotani H."/>
            <person name="Tanaka A."/>
            <person name="Asamizu E."/>
            <person name="Nakamura Y."/>
            <person name="Miyajima N."/>
            <person name="Hirosawa M."/>
            <person name="Sugiura M."/>
            <person name="Sasamoto S."/>
            <person name="Kimura T."/>
            <person name="Hosouchi T."/>
            <person name="Matsuno A."/>
            <person name="Muraki A."/>
            <person name="Nakazaki N."/>
            <person name="Naruo K."/>
            <person name="Okumura S."/>
            <person name="Shimpo S."/>
            <person name="Takeuchi C."/>
            <person name="Wada T."/>
            <person name="Watanabe A."/>
            <person name="Yamada M."/>
            <person name="Yasuda M."/>
            <person name="Tabata S."/>
        </authorList>
    </citation>
    <scope>NUCLEOTIDE SEQUENCE [LARGE SCALE GENOMIC DNA]</scope>
    <source>
        <strain>ATCC 27184 / PCC 6803 / Kazusa</strain>
    </source>
</reference>
<reference key="2">
    <citation type="journal article" date="2018" name="Nat. Chem. Biol.">
        <title>The cyanobacterial ornithine-ammonia cycle involves an arginine dihydrolase.</title>
        <authorList>
            <person name="Zhang H."/>
            <person name="Liu Y."/>
            <person name="Nie X."/>
            <person name="Liu L."/>
            <person name="Hua Q."/>
            <person name="Zhao G.P."/>
            <person name="Yang C."/>
        </authorList>
    </citation>
    <scope>FUNCTION</scope>
    <scope>CATALYTIC ACTIVITY</scope>
    <scope>ACTIVITY REGULATION</scope>
    <scope>BIOPHYSICOCHEMICAL PROPERTIES</scope>
    <scope>DOMAIN</scope>
    <scope>DISRUPTION PHENOTYPE</scope>
    <source>
        <strain>ATCC 27184 / PCC 6803 / Kazusa</strain>
    </source>
</reference>
<reference key="3">
    <citation type="journal article" date="2019" name="Mol. Microbiol.">
        <title>Arginine and nitrogen mobilization in cyanobacteria.</title>
        <authorList>
            <person name="Zhang H."/>
            <person name="Yang C."/>
        </authorList>
    </citation>
    <scope>FUNCTION</scope>
    <source>
        <strain>ATCC 27184 / PCC 6803 / Kazusa</strain>
    </source>
</reference>
<reference key="4">
    <citation type="journal article" date="2020" name="J. Biol. Chem.">
        <title>Arginine catabolism enzyme AgrE/ArgZ likely involves a cyanobacterial specific factor.</title>
        <authorList>
            <person name="Flores E."/>
        </authorList>
    </citation>
    <scope>COMMENT ON ORNITHINE CYCLODEAMINASE ACTIVITY</scope>
</reference>
<reference evidence="10 11 12 13" key="5">
    <citation type="journal article" date="2020" name="J. Biol. Chem.">
        <title>Crystal structures and biochemical analyses of the bacterial arginine dihydrolase ArgZ suggests a 'bond rotation' catalytic mechanism.</title>
        <authorList>
            <person name="Zhuang N."/>
            <person name="Zhang H."/>
            <person name="Li L."/>
            <person name="Wu X."/>
            <person name="Yang C."/>
            <person name="Zhang Y."/>
        </authorList>
    </citation>
    <scope>X-RAY CRYSTALLOGRAPHY (1.14 ANGSTROMS) OF APOENZYME; OF 1-281 IN COMPLEX WITH L-ORNITHINE AND OF 1-281 OF MUTANTS SER-71 AND SER-264 IN COMPLEX WITH ARGININE</scope>
    <scope>FUNCTION</scope>
    <scope>CATALYTIC ACTIVITY</scope>
    <scope>SUBUNIT</scope>
    <scope>DOMAIN</scope>
    <scope>ACTIVE SITE</scope>
    <scope>MUTAGENESIS OF ASN-22; ASP-65; PHE-68; ASN-71; ARG-90; GLU-118; ARG-139; TYR-167; HIS-168 AND CYS-264</scope>
    <source>
        <strain>ATCC 27184 / PCC 6803 / Kazusa</strain>
    </source>
</reference>
<feature type="chain" id="PRO_0000460631" description="Bifunctional arginine dihydrolase/ornithine cyclodeaminase ArgZ">
    <location>
        <begin position="1"/>
        <end position="705"/>
    </location>
</feature>
<feature type="region of interest" description="Arginine dihydrolase" evidence="8">
    <location>
        <begin position="10"/>
        <end position="269"/>
    </location>
</feature>
<feature type="region of interest" description="Ornithine cyclodeaminase" evidence="7">
    <location>
        <begin position="285"/>
        <end position="695"/>
    </location>
</feature>
<feature type="active site" description="Proton donor/acceptor" evidence="8">
    <location>
        <position position="168"/>
    </location>
</feature>
<feature type="active site" description="Nucleophile" evidence="8">
    <location>
        <position position="264"/>
    </location>
</feature>
<feature type="binding site" evidence="4 11 13">
    <location>
        <position position="22"/>
    </location>
    <ligand>
        <name>L-arginine</name>
        <dbReference type="ChEBI" id="CHEBI:32682"/>
    </ligand>
</feature>
<feature type="binding site" evidence="4 12">
    <location>
        <position position="22"/>
    </location>
    <ligand>
        <name>L-ornithine</name>
        <dbReference type="ChEBI" id="CHEBI:46911"/>
    </ligand>
</feature>
<feature type="binding site" evidence="4 13">
    <location>
        <position position="71"/>
    </location>
    <ligand>
        <name>L-arginine</name>
        <dbReference type="ChEBI" id="CHEBI:32682"/>
    </ligand>
</feature>
<feature type="binding site" evidence="4 12">
    <location>
        <position position="71"/>
    </location>
    <ligand>
        <name>L-ornithine</name>
        <dbReference type="ChEBI" id="CHEBI:46911"/>
    </ligand>
</feature>
<feature type="binding site" evidence="4 11 13">
    <location>
        <position position="90"/>
    </location>
    <ligand>
        <name>L-arginine</name>
        <dbReference type="ChEBI" id="CHEBI:32682"/>
    </ligand>
</feature>
<feature type="binding site" evidence="4 12">
    <location>
        <position position="90"/>
    </location>
    <ligand>
        <name>L-ornithine</name>
        <dbReference type="ChEBI" id="CHEBI:46911"/>
    </ligand>
</feature>
<feature type="binding site" evidence="4 11 13">
    <location>
        <position position="139"/>
    </location>
    <ligand>
        <name>L-arginine</name>
        <dbReference type="ChEBI" id="CHEBI:32682"/>
    </ligand>
</feature>
<feature type="binding site" evidence="4 12">
    <location>
        <position position="139"/>
    </location>
    <ligand>
        <name>L-ornithine</name>
        <dbReference type="ChEBI" id="CHEBI:46911"/>
    </ligand>
</feature>
<feature type="binding site" evidence="4 11">
    <location>
        <position position="168"/>
    </location>
    <ligand>
        <name>L-arginine</name>
        <dbReference type="ChEBI" id="CHEBI:32682"/>
    </ligand>
</feature>
<feature type="binding site" evidence="4 12">
    <location>
        <position position="168"/>
    </location>
    <ligand>
        <name>L-ornithine</name>
        <dbReference type="ChEBI" id="CHEBI:46911"/>
    </ligand>
</feature>
<feature type="binding site" evidence="4 11 13">
    <location>
        <position position="170"/>
    </location>
    <ligand>
        <name>L-arginine</name>
        <dbReference type="ChEBI" id="CHEBI:32682"/>
    </ligand>
</feature>
<feature type="binding site" evidence="4 13">
    <location>
        <position position="258"/>
    </location>
    <ligand>
        <name>L-arginine</name>
        <dbReference type="ChEBI" id="CHEBI:32682"/>
    </ligand>
</feature>
<feature type="binding site" evidence="4 12">
    <location>
        <position position="258"/>
    </location>
    <ligand>
        <name>L-ornithine</name>
        <dbReference type="ChEBI" id="CHEBI:46911"/>
    </ligand>
</feature>
<feature type="binding site" description="covalent" evidence="4 11">
    <location>
        <position position="264"/>
    </location>
    <ligand>
        <name>L-arginine</name>
        <dbReference type="ChEBI" id="CHEBI:32682"/>
    </ligand>
</feature>
<feature type="binding site" evidence="4 12">
    <location>
        <position position="264"/>
    </location>
    <ligand>
        <name>L-ornithine</name>
        <dbReference type="ChEBI" id="CHEBI:46911"/>
    </ligand>
</feature>
<feature type="binding site" evidence="1">
    <location>
        <position position="525"/>
    </location>
    <ligand>
        <name>NAD(+)</name>
        <dbReference type="ChEBI" id="CHEBI:57540"/>
    </ligand>
</feature>
<feature type="binding site" evidence="1">
    <location>
        <position position="526"/>
    </location>
    <ligand>
        <name>NAD(+)</name>
        <dbReference type="ChEBI" id="CHEBI:57540"/>
    </ligand>
</feature>
<feature type="binding site" evidence="1">
    <location>
        <position position="604"/>
    </location>
    <ligand>
        <name>NAD(+)</name>
        <dbReference type="ChEBI" id="CHEBI:57540"/>
    </ligand>
</feature>
<feature type="binding site" evidence="1">
    <location>
        <position position="636"/>
    </location>
    <ligand>
        <name>NAD(+)</name>
        <dbReference type="ChEBI" id="CHEBI:57540"/>
    </ligand>
</feature>
<feature type="binding site" evidence="1">
    <location>
        <position position="637"/>
    </location>
    <ligand>
        <name>NAD(+)</name>
        <dbReference type="ChEBI" id="CHEBI:57540"/>
    </ligand>
</feature>
<feature type="binding site" evidence="1">
    <location>
        <position position="638"/>
    </location>
    <ligand>
        <name>NAD(+)</name>
        <dbReference type="ChEBI" id="CHEBI:57540"/>
    </ligand>
</feature>
<feature type="binding site" evidence="1">
    <location>
        <position position="639"/>
    </location>
    <ligand>
        <name>NAD(+)</name>
        <dbReference type="ChEBI" id="CHEBI:57540"/>
    </ligand>
</feature>
<feature type="binding site" evidence="1">
    <location>
        <position position="657"/>
    </location>
    <ligand>
        <name>NAD(+)</name>
        <dbReference type="ChEBI" id="CHEBI:57540"/>
    </ligand>
</feature>
<feature type="binding site" evidence="1">
    <location>
        <position position="680"/>
    </location>
    <ligand>
        <name>NAD(+)</name>
        <dbReference type="ChEBI" id="CHEBI:57540"/>
    </ligand>
</feature>
<feature type="binding site" evidence="1">
    <location>
        <position position="681"/>
    </location>
    <ligand>
        <name>NAD(+)</name>
        <dbReference type="ChEBI" id="CHEBI:57540"/>
    </ligand>
</feature>
<feature type="site" description="Key determinant for dihydrolase activity" evidence="8">
    <location>
        <position position="71"/>
    </location>
</feature>
<feature type="mutagenesis site" description="Significant loss of arginine dihydrolase activity." evidence="4">
    <original>N</original>
    <variation>A</variation>
    <location>
        <position position="22"/>
    </location>
</feature>
<feature type="mutagenesis site" description="Significant loss of arginine dihydrolase activity." evidence="4">
    <original>D</original>
    <variation>A</variation>
    <location>
        <position position="65"/>
    </location>
</feature>
<feature type="mutagenesis site" description="Significant loss of arginine dihydrolase activity." evidence="4">
    <original>F</original>
    <variation>A</variation>
    <location>
        <position position="68"/>
    </location>
</feature>
<feature type="mutagenesis site" description="Produces equal trace amounts of citrulline and ornithine." evidence="4">
    <original>N</original>
    <variation>D</variation>
    <location>
        <position position="71"/>
    </location>
</feature>
<feature type="mutagenesis site" description="Transforms the enzyme from a dihydrolase to a deiminase." evidence="4">
    <original>N</original>
    <variation>S</variation>
    <location>
        <position position="71"/>
    </location>
</feature>
<feature type="mutagenesis site" description="Significant loss of arginine dihydrolase activity." evidence="4">
    <original>R</original>
    <variation>A</variation>
    <location>
        <position position="90"/>
    </location>
</feature>
<feature type="mutagenesis site" description="Complete loss of arginine dihydrolase activity." evidence="4">
    <original>E</original>
    <variation>A</variation>
    <location>
        <position position="118"/>
    </location>
</feature>
<feature type="mutagenesis site" description="Significant loss of arginine dihydrolase activity." evidence="4">
    <original>R</original>
    <variation>A</variation>
    <location>
        <position position="139"/>
    </location>
</feature>
<feature type="mutagenesis site" description="Significant loss of arginine dihydrolase activity." evidence="4">
    <original>Y</original>
    <variation>A</variation>
    <location>
        <position position="167"/>
    </location>
</feature>
<feature type="mutagenesis site" description="Complete loss of arginine dihydrolase activity." evidence="4">
    <original>H</original>
    <variation>F</variation>
    <location>
        <position position="168"/>
    </location>
</feature>
<feature type="mutagenesis site" description="Complete loss of arginine dihydrolase activity." evidence="4">
    <original>C</original>
    <variation>S</variation>
    <location>
        <position position="264"/>
    </location>
</feature>
<feature type="strand" evidence="15">
    <location>
        <begin position="6"/>
        <end position="9"/>
    </location>
</feature>
<feature type="helix" evidence="15">
    <location>
        <begin position="23"/>
        <end position="25"/>
    </location>
</feature>
<feature type="helix" evidence="15">
    <location>
        <begin position="34"/>
        <end position="49"/>
    </location>
</feature>
<feature type="strand" evidence="15">
    <location>
        <begin position="52"/>
        <end position="56"/>
    </location>
</feature>
<feature type="helix" evidence="15">
    <location>
        <begin position="64"/>
        <end position="67"/>
    </location>
</feature>
<feature type="helix" evidence="15">
    <location>
        <begin position="69"/>
        <end position="71"/>
    </location>
</feature>
<feature type="strand" evidence="15">
    <location>
        <begin position="72"/>
        <end position="76"/>
    </location>
</feature>
<feature type="strand" evidence="15">
    <location>
        <begin position="79"/>
        <end position="82"/>
    </location>
</feature>
<feature type="helix" evidence="15">
    <location>
        <begin position="88"/>
        <end position="91"/>
    </location>
</feature>
<feature type="helix" evidence="15">
    <location>
        <begin position="94"/>
        <end position="103"/>
    </location>
</feature>
<feature type="strand" evidence="15">
    <location>
        <begin position="107"/>
        <end position="109"/>
    </location>
</feature>
<feature type="helix" evidence="15">
    <location>
        <begin position="119"/>
        <end position="122"/>
    </location>
</feature>
<feature type="strand" evidence="15">
    <location>
        <begin position="123"/>
        <end position="125"/>
    </location>
</feature>
<feature type="strand" evidence="15">
    <location>
        <begin position="132"/>
        <end position="140"/>
    </location>
</feature>
<feature type="helix" evidence="15">
    <location>
        <begin position="142"/>
        <end position="144"/>
    </location>
</feature>
<feature type="helix" evidence="15">
    <location>
        <begin position="145"/>
        <end position="152"/>
    </location>
</feature>
<feature type="strand" evidence="15">
    <location>
        <begin position="156"/>
        <end position="161"/>
    </location>
</feature>
<feature type="helix" evidence="15">
    <location>
        <begin position="169"/>
        <end position="171"/>
    </location>
</feature>
<feature type="strand" evidence="15">
    <location>
        <begin position="173"/>
        <end position="175"/>
    </location>
</feature>
<feature type="helix" evidence="15">
    <location>
        <begin position="177"/>
        <end position="179"/>
    </location>
</feature>
<feature type="strand" evidence="15">
    <location>
        <begin position="181"/>
        <end position="183"/>
    </location>
</feature>
<feature type="helix" evidence="15">
    <location>
        <begin position="185"/>
        <end position="187"/>
    </location>
</feature>
<feature type="helix" evidence="15">
    <location>
        <begin position="190"/>
        <end position="199"/>
    </location>
</feature>
<feature type="helix" evidence="15">
    <location>
        <begin position="202"/>
        <end position="204"/>
    </location>
</feature>
<feature type="strand" evidence="15">
    <location>
        <begin position="205"/>
        <end position="207"/>
    </location>
</feature>
<feature type="helix" evidence="15">
    <location>
        <begin position="210"/>
        <end position="213"/>
    </location>
</feature>
<feature type="turn" evidence="15">
    <location>
        <begin position="214"/>
        <end position="218"/>
    </location>
</feature>
<feature type="strand" evidence="15">
    <location>
        <begin position="221"/>
        <end position="223"/>
    </location>
</feature>
<feature type="strand" evidence="15">
    <location>
        <begin position="226"/>
        <end position="230"/>
    </location>
</feature>
<feature type="helix" evidence="15">
    <location>
        <begin position="234"/>
        <end position="242"/>
    </location>
</feature>
<feature type="strand" evidence="15">
    <location>
        <begin position="246"/>
        <end position="249"/>
    </location>
</feature>
<feature type="helix" evidence="15">
    <location>
        <begin position="253"/>
        <end position="256"/>
    </location>
</feature>
<feature type="turn" evidence="15">
    <location>
        <begin position="257"/>
        <end position="259"/>
    </location>
</feature>
<feature type="turn" evidence="15">
    <location>
        <begin position="262"/>
        <end position="265"/>
    </location>
</feature>
<feature type="strand" evidence="14">
    <location>
        <begin position="284"/>
        <end position="292"/>
    </location>
</feature>
<feature type="turn" evidence="14">
    <location>
        <begin position="294"/>
        <end position="297"/>
    </location>
</feature>
<feature type="helix" evidence="14">
    <location>
        <begin position="299"/>
        <end position="309"/>
    </location>
</feature>
<feature type="strand" evidence="14">
    <location>
        <begin position="313"/>
        <end position="323"/>
    </location>
</feature>
<feature type="turn" evidence="14">
    <location>
        <begin position="324"/>
        <end position="326"/>
    </location>
</feature>
<feature type="strand" evidence="14">
    <location>
        <begin position="329"/>
        <end position="339"/>
    </location>
</feature>
<feature type="helix" evidence="14">
    <location>
        <begin position="340"/>
        <end position="351"/>
    </location>
</feature>
<feature type="turn" evidence="14">
    <location>
        <begin position="359"/>
        <end position="361"/>
    </location>
</feature>
<feature type="strand" evidence="14">
    <location>
        <begin position="366"/>
        <end position="369"/>
    </location>
</feature>
<feature type="strand" evidence="14">
    <location>
        <begin position="389"/>
        <end position="392"/>
    </location>
</feature>
<feature type="strand" evidence="14">
    <location>
        <begin position="395"/>
        <end position="401"/>
    </location>
</feature>
<feature type="strand" evidence="14">
    <location>
        <begin position="407"/>
        <end position="411"/>
    </location>
</feature>
<feature type="turn" evidence="14">
    <location>
        <begin position="412"/>
        <end position="415"/>
    </location>
</feature>
<feature type="strand" evidence="14">
    <location>
        <begin position="416"/>
        <end position="420"/>
    </location>
</feature>
<feature type="turn" evidence="14">
    <location>
        <begin position="422"/>
        <end position="424"/>
    </location>
</feature>
<feature type="strand" evidence="14">
    <location>
        <begin position="430"/>
        <end position="435"/>
    </location>
</feature>
<feature type="helix" evidence="14">
    <location>
        <begin position="472"/>
        <end position="487"/>
    </location>
</feature>
<feature type="strand" evidence="14">
    <location>
        <begin position="491"/>
        <end position="496"/>
    </location>
</feature>
<feature type="helix" evidence="14">
    <location>
        <begin position="499"/>
        <end position="502"/>
    </location>
</feature>
<feature type="helix" evidence="14">
    <location>
        <begin position="506"/>
        <end position="514"/>
    </location>
</feature>
<feature type="strand" evidence="14">
    <location>
        <begin position="519"/>
        <end position="524"/>
    </location>
</feature>
<feature type="helix" evidence="14">
    <location>
        <begin position="525"/>
        <end position="537"/>
    </location>
</feature>
<feature type="helix" evidence="14">
    <location>
        <begin position="556"/>
        <end position="568"/>
    </location>
</feature>
<feature type="helix" evidence="14">
    <location>
        <begin position="571"/>
        <end position="576"/>
    </location>
</feature>
<feature type="helix" evidence="14">
    <location>
        <begin position="584"/>
        <end position="590"/>
    </location>
</feature>
<feature type="strand" evidence="14">
    <location>
        <begin position="595"/>
        <end position="598"/>
    </location>
</feature>
<feature type="helix" evidence="14">
    <location>
        <begin position="614"/>
        <end position="625"/>
    </location>
</feature>
<feature type="strand" evidence="14">
    <location>
        <begin position="628"/>
        <end position="635"/>
    </location>
</feature>
<feature type="helix" evidence="14">
    <location>
        <begin position="637"/>
        <end position="646"/>
    </location>
</feature>
<feature type="strand" evidence="14">
    <location>
        <begin position="651"/>
        <end position="658"/>
    </location>
</feature>
<feature type="strand" evidence="14">
    <location>
        <begin position="660"/>
        <end position="662"/>
    </location>
</feature>
<feature type="strand" evidence="14">
    <location>
        <begin position="674"/>
        <end position="679"/>
    </location>
</feature>
<feature type="helix" evidence="14">
    <location>
        <begin position="681"/>
        <end position="693"/>
    </location>
</feature>
<feature type="turn" evidence="14">
    <location>
        <begin position="694"/>
        <end position="696"/>
    </location>
</feature>
<name>ARGZ_SYNY3</name>
<evidence type="ECO:0000250" key="1">
    <source>
        <dbReference type="UniProtKB" id="Q8YMD9"/>
    </source>
</evidence>
<evidence type="ECO:0000269" key="2">
    <source>
    </source>
</evidence>
<evidence type="ECO:0000269" key="3">
    <source>
    </source>
</evidence>
<evidence type="ECO:0000269" key="4">
    <source>
    </source>
</evidence>
<evidence type="ECO:0000269" key="5">
    <source>
    </source>
</evidence>
<evidence type="ECO:0000303" key="6">
    <source>
    </source>
</evidence>
<evidence type="ECO:0000305" key="7"/>
<evidence type="ECO:0000305" key="8">
    <source>
    </source>
</evidence>
<evidence type="ECO:0000312" key="9">
    <source>
        <dbReference type="EMBL" id="BAA18641.1"/>
    </source>
</evidence>
<evidence type="ECO:0007744" key="10">
    <source>
        <dbReference type="PDB" id="6JUY"/>
    </source>
</evidence>
<evidence type="ECO:0007744" key="11">
    <source>
        <dbReference type="PDB" id="6JUZ"/>
    </source>
</evidence>
<evidence type="ECO:0007744" key="12">
    <source>
        <dbReference type="PDB" id="6JV0"/>
    </source>
</evidence>
<evidence type="ECO:0007744" key="13">
    <source>
        <dbReference type="PDB" id="6JV1"/>
    </source>
</evidence>
<evidence type="ECO:0007829" key="14">
    <source>
        <dbReference type="PDB" id="6JUY"/>
    </source>
</evidence>
<evidence type="ECO:0007829" key="15">
    <source>
        <dbReference type="PDB" id="6JV0"/>
    </source>
</evidence>